<accession>D8JBB8</accession>
<gene>
    <name type="ordered locus">HacjB3_16066</name>
</gene>
<dbReference type="EC" id="4.1.1.97"/>
<dbReference type="EMBL" id="CP002063">
    <property type="protein sequence ID" value="ADJ16571.1"/>
    <property type="molecule type" value="Genomic_DNA"/>
</dbReference>
<dbReference type="RefSeq" id="WP_008413871.1">
    <property type="nucleotide sequence ID" value="NC_014298.1"/>
</dbReference>
<dbReference type="SMR" id="D8JBB8"/>
<dbReference type="GeneID" id="9421016"/>
<dbReference type="KEGG" id="hje:HacjB3_16066"/>
<dbReference type="eggNOG" id="arCOG11423">
    <property type="taxonomic scope" value="Archaea"/>
</dbReference>
<dbReference type="HOGENOM" id="CLU_092522_1_1_2"/>
<dbReference type="OrthoDB" id="195007at2157"/>
<dbReference type="UniPathway" id="UPA00394">
    <property type="reaction ID" value="UER00652"/>
</dbReference>
<dbReference type="Proteomes" id="UP000000390">
    <property type="component" value="Plasmid 1"/>
</dbReference>
<dbReference type="GO" id="GO:0051997">
    <property type="term" value="F:2-oxo-4-hydroxy-4-carboxy-5-ureidoimidazoline decarboxylase activity"/>
    <property type="evidence" value="ECO:0007669"/>
    <property type="project" value="UniProtKB-EC"/>
</dbReference>
<dbReference type="GO" id="GO:0016491">
    <property type="term" value="F:oxidoreductase activity"/>
    <property type="evidence" value="ECO:0007669"/>
    <property type="project" value="UniProtKB-KW"/>
</dbReference>
<dbReference type="GO" id="GO:0000255">
    <property type="term" value="P:allantoin metabolic process"/>
    <property type="evidence" value="ECO:0007669"/>
    <property type="project" value="InterPro"/>
</dbReference>
<dbReference type="GO" id="GO:0006144">
    <property type="term" value="P:purine nucleobase metabolic process"/>
    <property type="evidence" value="ECO:0007669"/>
    <property type="project" value="UniProtKB-KW"/>
</dbReference>
<dbReference type="GO" id="GO:0019628">
    <property type="term" value="P:urate catabolic process"/>
    <property type="evidence" value="ECO:0007669"/>
    <property type="project" value="UniProtKB-UniPathway"/>
</dbReference>
<dbReference type="Gene3D" id="1.10.3330.10">
    <property type="entry name" value="Oxo-4-hydroxy-4-carboxy-5-ureidoimidazoline decarboxylase"/>
    <property type="match status" value="1"/>
</dbReference>
<dbReference type="InterPro" id="IPR018020">
    <property type="entry name" value="OHCU_decarboxylase"/>
</dbReference>
<dbReference type="InterPro" id="IPR017580">
    <property type="entry name" value="OHCU_decarboxylase-1"/>
</dbReference>
<dbReference type="InterPro" id="IPR036778">
    <property type="entry name" value="OHCU_decarboxylase_sf"/>
</dbReference>
<dbReference type="NCBIfam" id="TIGR03164">
    <property type="entry name" value="UHCUDC"/>
    <property type="match status" value="1"/>
</dbReference>
<dbReference type="PANTHER" id="PTHR43466">
    <property type="entry name" value="2-OXO-4-HYDROXY-4-CARBOXY-5-UREIDOIMIDAZOLINE DECARBOXYLASE-RELATED"/>
    <property type="match status" value="1"/>
</dbReference>
<dbReference type="PANTHER" id="PTHR43466:SF1">
    <property type="entry name" value="2-OXO-4-HYDROXY-4-CARBOXY-5-UREIDOIMIDAZOLINE DECARBOXYLASE-RELATED"/>
    <property type="match status" value="1"/>
</dbReference>
<dbReference type="Pfam" id="PF09349">
    <property type="entry name" value="OHCU_decarbox"/>
    <property type="match status" value="1"/>
</dbReference>
<dbReference type="SUPFAM" id="SSF158694">
    <property type="entry name" value="UraD-Like"/>
    <property type="match status" value="1"/>
</dbReference>
<comment type="function">
    <text evidence="1">Catalyzes the stereoselective decarboxylation of 2-oxo-4-hydroxy-4-carboxy-5-ureidoimidazoline (OHCU) to (S)-allantoin.</text>
</comment>
<comment type="catalytic activity">
    <reaction>
        <text>5-hydroxy-2-oxo-4-ureido-2,5-dihydro-1H-imidazole-5-carboxylate + H(+) = (S)-allantoin + CO2</text>
        <dbReference type="Rhea" id="RHEA:26301"/>
        <dbReference type="ChEBI" id="CHEBI:15378"/>
        <dbReference type="ChEBI" id="CHEBI:15678"/>
        <dbReference type="ChEBI" id="CHEBI:16526"/>
        <dbReference type="ChEBI" id="CHEBI:58639"/>
        <dbReference type="EC" id="4.1.1.97"/>
    </reaction>
</comment>
<comment type="pathway">
    <text>Purine metabolism; urate degradation; (S)-allantoin from urate: step 3/3.</text>
</comment>
<comment type="similarity">
    <text evidence="3">Belongs to the OHCU decarboxylase family.</text>
</comment>
<evidence type="ECO:0000250" key="1"/>
<evidence type="ECO:0000256" key="2">
    <source>
        <dbReference type="SAM" id="MobiDB-lite"/>
    </source>
</evidence>
<evidence type="ECO:0000305" key="3"/>
<reference key="1">
    <citation type="journal article" date="2010" name="J. Bacteriol.">
        <title>Complete genome sequence of Halalkalicoccus jeotgali B3(T), an extremely halophilic archaeon.</title>
        <authorList>
            <person name="Roh S.W."/>
            <person name="Nam Y.D."/>
            <person name="Nam S.H."/>
            <person name="Choi S.H."/>
            <person name="Park H.S."/>
            <person name="Bae J.W."/>
        </authorList>
    </citation>
    <scope>NUCLEOTIDE SEQUENCE [LARGE SCALE GENOMIC DNA]</scope>
    <source>
        <strain>DSM 18796 / CECT 7217 / JCM 14584 / KCTC 4019 / B3</strain>
    </source>
</reference>
<protein>
    <recommendedName>
        <fullName>2-oxo-4-hydroxy-4-carboxy-5-ureidoimidazoline decarboxylase</fullName>
        <shortName>OHCU decarboxylase</shortName>
        <ecNumber>4.1.1.97</ecNumber>
    </recommendedName>
</protein>
<keyword id="KW-0210">Decarboxylase</keyword>
<keyword id="KW-0456">Lyase</keyword>
<keyword id="KW-0560">Oxidoreductase</keyword>
<keyword id="KW-0614">Plasmid</keyword>
<keyword id="KW-0659">Purine metabolism</keyword>
<geneLocation type="plasmid">
    <name>1</name>
</geneLocation>
<name>URAD_HALJB</name>
<feature type="chain" id="PRO_0000411959" description="2-oxo-4-hydroxy-4-carboxy-5-ureidoimidazoline decarboxylase">
    <location>
        <begin position="1"/>
        <end position="176"/>
    </location>
</feature>
<feature type="region of interest" description="Disordered" evidence="2">
    <location>
        <begin position="72"/>
        <end position="96"/>
    </location>
</feature>
<feature type="active site" description="Proton donor; for OHCU decarboxylase activity" evidence="1">
    <location>
        <position position="70"/>
    </location>
</feature>
<feature type="binding site" evidence="1">
    <location>
        <position position="71"/>
    </location>
    <ligand>
        <name>substrate</name>
    </ligand>
</feature>
<feature type="binding site" evidence="1">
    <location>
        <begin position="83"/>
        <end position="87"/>
    </location>
    <ligand>
        <name>substrate</name>
    </ligand>
</feature>
<feature type="binding site" evidence="1">
    <location>
        <begin position="118"/>
        <end position="122"/>
    </location>
    <ligand>
        <name>substrate</name>
    </ligand>
</feature>
<proteinExistence type="inferred from homology"/>
<sequence>MTRLTVEDLNQADKERFVDAVGDVYEESPWVAKRTWSEQPFSSIDGLQQAMANTVQDASQQKQLELLRAHPDLGERTEMTDESQEEQASAGLDRLPPAQYETFQTLNDTYRDKFGFPFIMAVKDESVGTIQQAMEDRIDHSRSKEFQTALNEVNVIAALRLEELTVPRDGTQEQHA</sequence>
<organism>
    <name type="scientific">Halalkalicoccus jeotgali (strain DSM 18796 / CECT 7217 / JCM 14584 / KCTC 4019 / B3)</name>
    <dbReference type="NCBI Taxonomy" id="795797"/>
    <lineage>
        <taxon>Archaea</taxon>
        <taxon>Methanobacteriati</taxon>
        <taxon>Methanobacteriota</taxon>
        <taxon>Stenosarchaea group</taxon>
        <taxon>Halobacteria</taxon>
        <taxon>Halobacteriales</taxon>
        <taxon>Halococcaceae</taxon>
        <taxon>Halalkalicoccus</taxon>
    </lineage>
</organism>